<proteinExistence type="inferred from homology"/>
<evidence type="ECO:0000255" key="1">
    <source>
        <dbReference type="PROSITE-ProRule" id="PRU01026"/>
    </source>
</evidence>
<dbReference type="EC" id="2.1.1.184"/>
<dbReference type="EMBL" id="K00551">
    <property type="protein sequence ID" value="AAA25527.1"/>
    <property type="molecule type" value="Genomic_DNA"/>
</dbReference>
<dbReference type="SMR" id="P06573"/>
<dbReference type="GO" id="GO:0005829">
    <property type="term" value="C:cytosol"/>
    <property type="evidence" value="ECO:0007669"/>
    <property type="project" value="TreeGrafter"/>
</dbReference>
<dbReference type="GO" id="GO:0052910">
    <property type="term" value="F:23S rRNA (adenine(2085)-N(6))-dimethyltransferase activity"/>
    <property type="evidence" value="ECO:0007669"/>
    <property type="project" value="UniProtKB-EC"/>
</dbReference>
<dbReference type="GO" id="GO:0003723">
    <property type="term" value="F:RNA binding"/>
    <property type="evidence" value="ECO:0007669"/>
    <property type="project" value="UniProtKB-KW"/>
</dbReference>
<dbReference type="GO" id="GO:0000179">
    <property type="term" value="F:rRNA (adenine-N6,N6-)-dimethyltransferase activity"/>
    <property type="evidence" value="ECO:0007669"/>
    <property type="project" value="InterPro"/>
</dbReference>
<dbReference type="GO" id="GO:0046677">
    <property type="term" value="P:response to antibiotic"/>
    <property type="evidence" value="ECO:0007669"/>
    <property type="project" value="UniProtKB-KW"/>
</dbReference>
<dbReference type="CDD" id="cd02440">
    <property type="entry name" value="AdoMet_MTases"/>
    <property type="match status" value="1"/>
</dbReference>
<dbReference type="Gene3D" id="1.10.8.100">
    <property type="entry name" value="Ribosomal RNA adenine dimethylase-like, domain 2"/>
    <property type="match status" value="1"/>
</dbReference>
<dbReference type="Gene3D" id="3.40.50.150">
    <property type="entry name" value="Vaccinia Virus protein VP39"/>
    <property type="match status" value="1"/>
</dbReference>
<dbReference type="InterPro" id="IPR001737">
    <property type="entry name" value="KsgA/Erm"/>
</dbReference>
<dbReference type="InterPro" id="IPR023165">
    <property type="entry name" value="rRNA_Ade_diMease-like_C"/>
</dbReference>
<dbReference type="InterPro" id="IPR020596">
    <property type="entry name" value="rRNA_Ade_Mease_Trfase_CS"/>
</dbReference>
<dbReference type="InterPro" id="IPR020598">
    <property type="entry name" value="rRNA_Ade_methylase_Trfase_N"/>
</dbReference>
<dbReference type="InterPro" id="IPR029063">
    <property type="entry name" value="SAM-dependent_MTases_sf"/>
</dbReference>
<dbReference type="NCBIfam" id="NF000499">
    <property type="entry name" value="Erm23S_rRNA_broad"/>
    <property type="match status" value="1"/>
</dbReference>
<dbReference type="NCBIfam" id="NF012220">
    <property type="entry name" value="erm_B_23S_MT"/>
    <property type="match status" value="1"/>
</dbReference>
<dbReference type="PANTHER" id="PTHR11727">
    <property type="entry name" value="DIMETHYLADENOSINE TRANSFERASE"/>
    <property type="match status" value="1"/>
</dbReference>
<dbReference type="PANTHER" id="PTHR11727:SF7">
    <property type="entry name" value="DIMETHYLADENOSINE TRANSFERASE-RELATED"/>
    <property type="match status" value="1"/>
</dbReference>
<dbReference type="Pfam" id="PF00398">
    <property type="entry name" value="RrnaAD"/>
    <property type="match status" value="1"/>
</dbReference>
<dbReference type="SMART" id="SM00650">
    <property type="entry name" value="rADc"/>
    <property type="match status" value="1"/>
</dbReference>
<dbReference type="SUPFAM" id="SSF53335">
    <property type="entry name" value="S-adenosyl-L-methionine-dependent methyltransferases"/>
    <property type="match status" value="1"/>
</dbReference>
<dbReference type="PROSITE" id="PS01131">
    <property type="entry name" value="RRNA_A_DIMETH"/>
    <property type="match status" value="1"/>
</dbReference>
<dbReference type="PROSITE" id="PS51689">
    <property type="entry name" value="SAM_RNA_A_N6_MT"/>
    <property type="match status" value="1"/>
</dbReference>
<name>ERM_STRSA</name>
<feature type="chain" id="PRO_0000101691" description="rRNA adenine N-6-methyltransferase">
    <location>
        <begin position="1"/>
        <end position="245"/>
    </location>
</feature>
<feature type="binding site" evidence="1">
    <location>
        <position position="10"/>
    </location>
    <ligand>
        <name>S-adenosyl-L-methionine</name>
        <dbReference type="ChEBI" id="CHEBI:59789"/>
    </ligand>
</feature>
<feature type="binding site" evidence="1">
    <location>
        <position position="12"/>
    </location>
    <ligand>
        <name>S-adenosyl-L-methionine</name>
        <dbReference type="ChEBI" id="CHEBI:59789"/>
    </ligand>
</feature>
<feature type="binding site" evidence="1">
    <location>
        <position position="37"/>
    </location>
    <ligand>
        <name>S-adenosyl-L-methionine</name>
        <dbReference type="ChEBI" id="CHEBI:59789"/>
    </ligand>
</feature>
<feature type="binding site" evidence="1">
    <location>
        <position position="58"/>
    </location>
    <ligand>
        <name>S-adenosyl-L-methionine</name>
        <dbReference type="ChEBI" id="CHEBI:59789"/>
    </ligand>
</feature>
<feature type="binding site" evidence="1">
    <location>
        <position position="83"/>
    </location>
    <ligand>
        <name>S-adenosyl-L-methionine</name>
        <dbReference type="ChEBI" id="CHEBI:59789"/>
    </ligand>
</feature>
<feature type="binding site" evidence="1">
    <location>
        <position position="100"/>
    </location>
    <ligand>
        <name>S-adenosyl-L-methionine</name>
        <dbReference type="ChEBI" id="CHEBI:59789"/>
    </ligand>
</feature>
<organism>
    <name type="scientific">Streptococcus sanguinis</name>
    <dbReference type="NCBI Taxonomy" id="1305"/>
    <lineage>
        <taxon>Bacteria</taxon>
        <taxon>Bacillati</taxon>
        <taxon>Bacillota</taxon>
        <taxon>Bacilli</taxon>
        <taxon>Lactobacillales</taxon>
        <taxon>Streptococcaceae</taxon>
        <taxon>Streptococcus</taxon>
    </lineage>
</organism>
<comment type="function">
    <text>This protein produces a dimethylation of the adenine residue at position 2085 in 23S rRNA, resulting in reduced affinity between ribosomes and macrolide-lincosamide-streptogramin B antibiotics.</text>
</comment>
<comment type="catalytic activity">
    <reaction>
        <text>adenosine(2085) in 23S rRNA + 2 S-adenosyl-L-methionine = N(6)-dimethyladenosine(2085) in 23S rRNA + 2 S-adenosyl-L-homocysteine + 2 H(+)</text>
        <dbReference type="Rhea" id="RHEA:42784"/>
        <dbReference type="Rhea" id="RHEA-COMP:10237"/>
        <dbReference type="Rhea" id="RHEA-COMP:10238"/>
        <dbReference type="ChEBI" id="CHEBI:15378"/>
        <dbReference type="ChEBI" id="CHEBI:57856"/>
        <dbReference type="ChEBI" id="CHEBI:59789"/>
        <dbReference type="ChEBI" id="CHEBI:74411"/>
        <dbReference type="ChEBI" id="CHEBI:74493"/>
        <dbReference type="EC" id="2.1.1.184"/>
    </reaction>
</comment>
<comment type="similarity">
    <text evidence="1">Belongs to the class I-like SAM-binding methyltransferase superfamily. rRNA adenine N(6)-methyltransferase family.</text>
</comment>
<accession>P06573</accession>
<sequence length="245" mass="28796">MKKNIKYSQNFLTNEKVLNQIIKQLNLKETDTVYEIGTGKGHLTTKLAKISKQVTSIELDSHLFNLSSEKLKLNIRVTLIHQDILQFQFPNKQRYKIVGSIPYHLSTQIIKKVVFESHASDIYLIVEEGFYKRTLDIHRSLGLLLHTQVSIQQLLKLPAECFHPKPKVNSVLIKLTRHTTDVPDKYWKLYTYFVSKWVNREYRQLFTKNQFHQAMKHAKVNNLSTVTYEQVLSIFNSYLLFNGRK</sequence>
<geneLocation type="plasmid">
    <name>pAM77</name>
</geneLocation>
<reference key="1">
    <citation type="journal article" date="1983" name="J. Bacteriol.">
        <title>A complex attenuator regulates inducible resistance to macrolides, lincosamides, and streptogramin type B antibiotics in Streptococcus sanguis.</title>
        <authorList>
            <person name="Horinouchi S."/>
            <person name="Byeon W.-H."/>
            <person name="Weisblum B."/>
        </authorList>
    </citation>
    <scope>NUCLEOTIDE SEQUENCE [GENOMIC DNA]</scope>
</reference>
<protein>
    <recommendedName>
        <fullName>rRNA adenine N-6-methyltransferase</fullName>
        <ecNumber>2.1.1.184</ecNumber>
    </recommendedName>
    <alternativeName>
        <fullName>Macrolide-lincosamide-streptogramin B resistance protein</fullName>
    </alternativeName>
</protein>
<keyword id="KW-0046">Antibiotic resistance</keyword>
<keyword id="KW-0489">Methyltransferase</keyword>
<keyword id="KW-0614">Plasmid</keyword>
<keyword id="KW-0694">RNA-binding</keyword>
<keyword id="KW-0949">S-adenosyl-L-methionine</keyword>
<keyword id="KW-0808">Transferase</keyword>